<proteinExistence type="evidence at protein level"/>
<dbReference type="EMBL" id="L75794">
    <property type="protein sequence ID" value="AAB62276.1"/>
    <property type="molecule type" value="Genomic_DNA"/>
</dbReference>
<dbReference type="EMBL" id="U81156">
    <property type="protein sequence ID" value="AAB39262.1"/>
    <property type="molecule type" value="Genomic_DNA"/>
</dbReference>
<dbReference type="EMBL" id="AAFI02000103">
    <property type="protein sequence ID" value="EAL63601.1"/>
    <property type="molecule type" value="Genomic_DNA"/>
</dbReference>
<dbReference type="RefSeq" id="XP_637132.1">
    <property type="nucleotide sequence ID" value="XM_632040.1"/>
</dbReference>
<dbReference type="SMR" id="Q54K32"/>
<dbReference type="FunCoup" id="Q54K32">
    <property type="interactions" value="6"/>
</dbReference>
<dbReference type="IntAct" id="Q54K32">
    <property type="interactions" value="2"/>
</dbReference>
<dbReference type="STRING" id="44689.Q54K32"/>
<dbReference type="PaxDb" id="44689-DDB0191437"/>
<dbReference type="EnsemblProtists" id="EAL63601">
    <property type="protein sequence ID" value="EAL63601"/>
    <property type="gene ID" value="DDB_G0287585"/>
</dbReference>
<dbReference type="GeneID" id="8626227"/>
<dbReference type="KEGG" id="ddi:DDB_G0287585"/>
<dbReference type="dictyBase" id="DDB_G0287585">
    <property type="gene designation" value="rgaA"/>
</dbReference>
<dbReference type="VEuPathDB" id="AmoebaDB:DDB_G0287585"/>
<dbReference type="eggNOG" id="KOG2128">
    <property type="taxonomic scope" value="Eukaryota"/>
</dbReference>
<dbReference type="HOGENOM" id="CLU_009455_0_0_1"/>
<dbReference type="InParanoid" id="Q54K32"/>
<dbReference type="OMA" id="YMELTQK"/>
<dbReference type="PhylomeDB" id="Q54K32"/>
<dbReference type="Reactome" id="R-DDI-5626467">
    <property type="pathway name" value="RHO GTPases activate IQGAPs"/>
</dbReference>
<dbReference type="Reactome" id="R-DDI-6798695">
    <property type="pathway name" value="Neutrophil degranulation"/>
</dbReference>
<dbReference type="Reactome" id="R-DDI-9013149">
    <property type="pathway name" value="RAC1 GTPase cycle"/>
</dbReference>
<dbReference type="Reactome" id="R-DDI-9013404">
    <property type="pathway name" value="RAC2 GTPase cycle"/>
</dbReference>
<dbReference type="Reactome" id="R-DDI-9013406">
    <property type="pathway name" value="RHOQ GTPase cycle"/>
</dbReference>
<dbReference type="Reactome" id="R-DDI-9013408">
    <property type="pathway name" value="RHOG GTPase cycle"/>
</dbReference>
<dbReference type="Reactome" id="R-DDI-9013420">
    <property type="pathway name" value="RHOU GTPase cycle"/>
</dbReference>
<dbReference type="Reactome" id="R-DDI-9013424">
    <property type="pathway name" value="RHOV GTPase cycle"/>
</dbReference>
<dbReference type="PRO" id="PR:Q54K32"/>
<dbReference type="Proteomes" id="UP000002195">
    <property type="component" value="Chromosome 5"/>
</dbReference>
<dbReference type="GO" id="GO:0045180">
    <property type="term" value="C:basal cortex"/>
    <property type="evidence" value="ECO:0000314"/>
    <property type="project" value="dictyBase"/>
</dbReference>
<dbReference type="GO" id="GO:0005938">
    <property type="term" value="C:cell cortex"/>
    <property type="evidence" value="ECO:0000314"/>
    <property type="project" value="dictyBase"/>
</dbReference>
<dbReference type="GO" id="GO:0031254">
    <property type="term" value="C:cell trailing edge"/>
    <property type="evidence" value="ECO:0000314"/>
    <property type="project" value="dictyBase"/>
</dbReference>
<dbReference type="GO" id="GO:0032154">
    <property type="term" value="C:cleavage furrow"/>
    <property type="evidence" value="ECO:0000314"/>
    <property type="project" value="dictyBase"/>
</dbReference>
<dbReference type="GO" id="GO:0031255">
    <property type="term" value="C:lateral part of motile cell"/>
    <property type="evidence" value="ECO:0000314"/>
    <property type="project" value="dictyBase"/>
</dbReference>
<dbReference type="GO" id="GO:0005886">
    <property type="term" value="C:plasma membrane"/>
    <property type="evidence" value="ECO:0000314"/>
    <property type="project" value="dictyBase"/>
</dbReference>
<dbReference type="GO" id="GO:0051015">
    <property type="term" value="F:actin filament binding"/>
    <property type="evidence" value="ECO:0000318"/>
    <property type="project" value="GO_Central"/>
</dbReference>
<dbReference type="GO" id="GO:0045294">
    <property type="term" value="F:alpha-catenin binding"/>
    <property type="evidence" value="ECO:0000353"/>
    <property type="project" value="dictyBase"/>
</dbReference>
<dbReference type="GO" id="GO:0005516">
    <property type="term" value="F:calmodulin binding"/>
    <property type="evidence" value="ECO:0000250"/>
    <property type="project" value="dictyBase"/>
</dbReference>
<dbReference type="GO" id="GO:0005096">
    <property type="term" value="F:GTPase activator activity"/>
    <property type="evidence" value="ECO:0000314"/>
    <property type="project" value="dictyBase"/>
</dbReference>
<dbReference type="GO" id="GO:0019887">
    <property type="term" value="F:protein kinase regulator activity"/>
    <property type="evidence" value="ECO:0000315"/>
    <property type="project" value="dictyBase"/>
</dbReference>
<dbReference type="GO" id="GO:0031267">
    <property type="term" value="F:small GTPase binding"/>
    <property type="evidence" value="ECO:0000353"/>
    <property type="project" value="dictyBase"/>
</dbReference>
<dbReference type="GO" id="GO:0030036">
    <property type="term" value="P:actin cytoskeleton organization"/>
    <property type="evidence" value="ECO:0000315"/>
    <property type="project" value="dictyBase"/>
</dbReference>
<dbReference type="GO" id="GO:0048870">
    <property type="term" value="P:cell motility"/>
    <property type="evidence" value="ECO:0000315"/>
    <property type="project" value="dictyBase"/>
</dbReference>
<dbReference type="GO" id="GO:0043327">
    <property type="term" value="P:chemotaxis to cAMP"/>
    <property type="evidence" value="ECO:0000316"/>
    <property type="project" value="dictyBase"/>
</dbReference>
<dbReference type="GO" id="GO:0031154">
    <property type="term" value="P:culmination involved in sorocarp development"/>
    <property type="evidence" value="ECO:0000315"/>
    <property type="project" value="dictyBase"/>
</dbReference>
<dbReference type="GO" id="GO:0140509">
    <property type="term" value="P:epithelium-like organization"/>
    <property type="evidence" value="ECO:0000315"/>
    <property type="project" value="dictyBase"/>
</dbReference>
<dbReference type="GO" id="GO:0000165">
    <property type="term" value="P:MAPK cascade"/>
    <property type="evidence" value="ECO:0000315"/>
    <property type="project" value="dictyBase"/>
</dbReference>
<dbReference type="GO" id="GO:1903479">
    <property type="term" value="P:mitotic actomyosin contractile ring assembly actin filament organization"/>
    <property type="evidence" value="ECO:0000318"/>
    <property type="project" value="GO_Central"/>
</dbReference>
<dbReference type="GO" id="GO:0000281">
    <property type="term" value="P:mitotic cytokinesis"/>
    <property type="evidence" value="ECO:0000315"/>
    <property type="project" value="dictyBase"/>
</dbReference>
<dbReference type="GO" id="GO:1903665">
    <property type="term" value="P:negative regulation of asexual reproduction"/>
    <property type="evidence" value="ECO:0000315"/>
    <property type="project" value="dictyBase"/>
</dbReference>
<dbReference type="GO" id="GO:0051495">
    <property type="term" value="P:positive regulation of cytoskeleton organization"/>
    <property type="evidence" value="ECO:0000315"/>
    <property type="project" value="dictyBase"/>
</dbReference>
<dbReference type="GO" id="GO:0008104">
    <property type="term" value="P:protein localization"/>
    <property type="evidence" value="ECO:0000315"/>
    <property type="project" value="dictyBase"/>
</dbReference>
<dbReference type="GO" id="GO:0010468">
    <property type="term" value="P:regulation of gene expression"/>
    <property type="evidence" value="ECO:0000315"/>
    <property type="project" value="dictyBase"/>
</dbReference>
<dbReference type="GO" id="GO:0030587">
    <property type="term" value="P:sorocarp development"/>
    <property type="evidence" value="ECO:0007001"/>
    <property type="project" value="dictyBase"/>
</dbReference>
<dbReference type="GO" id="GO:0031149">
    <property type="term" value="P:sorocarp stalk cell differentiation"/>
    <property type="evidence" value="ECO:0000315"/>
    <property type="project" value="dictyBase"/>
</dbReference>
<dbReference type="GO" id="GO:0036360">
    <property type="term" value="P:sorocarp stalk morphogenesis"/>
    <property type="evidence" value="ECO:0000315"/>
    <property type="project" value="dictyBase"/>
</dbReference>
<dbReference type="GO" id="GO:0030435">
    <property type="term" value="P:sporulation resulting in formation of a cellular spore"/>
    <property type="evidence" value="ECO:0000315"/>
    <property type="project" value="dictyBase"/>
</dbReference>
<dbReference type="FunFam" id="1.10.506.10:FF:000004">
    <property type="entry name" value="IQ motif containing GTPase activating protein 1"/>
    <property type="match status" value="1"/>
</dbReference>
<dbReference type="Gene3D" id="1.10.506.10">
    <property type="entry name" value="GTPase Activation - p120gap, domain 1"/>
    <property type="match status" value="1"/>
</dbReference>
<dbReference type="InterPro" id="IPR000593">
    <property type="entry name" value="RasGAP_C"/>
</dbReference>
<dbReference type="InterPro" id="IPR001936">
    <property type="entry name" value="RasGAP_dom"/>
</dbReference>
<dbReference type="InterPro" id="IPR008936">
    <property type="entry name" value="Rho_GTPase_activation_prot"/>
</dbReference>
<dbReference type="PANTHER" id="PTHR14149:SF14">
    <property type="entry name" value="CALPONIN-HOMOLOGY (CH) DOMAIN-CONTAINING PROTEIN"/>
    <property type="match status" value="1"/>
</dbReference>
<dbReference type="PANTHER" id="PTHR14149">
    <property type="entry name" value="RAS GTPASE-ACTIVATING PROTEIN WITH IQ MOTIF"/>
    <property type="match status" value="1"/>
</dbReference>
<dbReference type="Pfam" id="PF00616">
    <property type="entry name" value="RasGAP"/>
    <property type="match status" value="1"/>
</dbReference>
<dbReference type="Pfam" id="PF03836">
    <property type="entry name" value="RasGAP_C"/>
    <property type="match status" value="1"/>
</dbReference>
<dbReference type="SMART" id="SM00323">
    <property type="entry name" value="RasGAP"/>
    <property type="match status" value="1"/>
</dbReference>
<dbReference type="SUPFAM" id="SSF48350">
    <property type="entry name" value="GTPase activation domain, GAP"/>
    <property type="match status" value="1"/>
</dbReference>
<dbReference type="SUPFAM" id="SSF143885">
    <property type="entry name" value="RGC domain-like"/>
    <property type="match status" value="1"/>
</dbReference>
<dbReference type="PROSITE" id="PS50018">
    <property type="entry name" value="RAS_GTPASE_ACTIV_2"/>
    <property type="match status" value="1"/>
</dbReference>
<accession>Q54K32</accession>
<accession>O15815</accession>
<accession>P90531</accession>
<sequence length="822" mass="94925">MNKEEYSDISDSESEEVHETNNHNEHEHEEEDDTPEIVVPERKFLKEDEDYSVPFPVMRECLVLLLQSRRILRDMMYYRFKMDRFLSGNLSVFEIQNLLHSQREDKESDWIAEIQELKRNLVSEVRRNHTLERDLNRLDKRIALLIKNRGNIQDVLADKAGLKAPKHKGDQKKPELINDPKKLEAYQNLFYLLQTEPKYLAGLVYLIQPEQMESFLGTVILTLFGDAFTPREEFLLLSLYRLSIQKEMANIATVGDFLKADTVVPKMIITYNKRKQGTDYLKAVIGPILSNVIKQELNLELKPNLVYAAIISEQEIRTGEKSTLDRNVSHEKALEVPEVTKTIKARVDQLISICEQFLDGIISSLNRLPYGIRWICKQIYQIAEKNFTKSTQDEILKVIGYFIYYRFIQVAMVSPEEYDLVGREIHPTARKNLINVSKVLQALFNFAQFGSSEKHFIPLNGWITSHMGDIKNYLQEIIEVGEPEDYLQVDKYMELTQKTKPVIIISLPEICNTHQLISKNLDSLVAKGEKDDPMRIIMKELDEFGPPPDIAADDDREVQLTLSNKFQKTIEEELSPGESLLSQTKEMVISLLRALPTLPEQKDQSDEPPNLVDVLNKARQADPSLEPEIKKILDNLKKLEEYNLTTSADNYSSFLKAVALEVVNRAEIREQQKKEKQRLTTSLNNLRKHQKYLNEQIAQYNQYLQDCRLKHYQNKSKKKKKGDGAKVGPFKFSFSELHKKGVIVDSEVPQITRKKIKFVISSDTVGVFDVSAKMAGIDVQTMRLELDDLLELNSIGTTTLELDQITLDVNMTIHLLNKLFLY</sequence>
<comment type="function">
    <text evidence="4 5 6 7">Part of signaling pathway that is required for completion of cytokinesis. gapA and rgaA control cortexillin localization to the cleavage furrow and hence may be involved in cleavage of the midbody in the final stage of cytokinesis by regulating the actin cytoskeleton. Forms a complex by linking activated rac1A to ctxA. Assembly of this complex is necessary for the recruitment of cortexillin to the midzone of a dividing cell. Overexpression leads to the suppression of the formation of cellular projections containing F-actin and to a defect in cytokinesis.</text>
</comment>
<comment type="subunit">
    <text evidence="4 5 7">Heterotetramer. Quaternary complex with activated rac1A, ctxA and ctxB. Interacts directly with rac1A and ctxA. Preferentially interacts with activated forms of rac1A, rac1B and rac1C. Interacts with racE.</text>
</comment>
<comment type="interaction">
    <interactant intactId="EBI-1808670">
        <id>Q54K32</id>
    </interactant>
    <interactant intactId="EBI-1810875">
        <id>Q54HG2</id>
        <label>ctxA</label>
    </interactant>
    <organismsDiffer>false</organismsDiffer>
    <experiments>2</experiments>
</comment>
<comment type="interaction">
    <interactant intactId="EBI-1808670">
        <id>Q54K32</id>
    </interactant>
    <interactant intactId="EBI-1808643">
        <id>P34144</id>
        <label>rac1A</label>
    </interactant>
    <organismsDiffer>false</organismsDiffer>
    <experiments>4</experiments>
</comment>
<comment type="subcellular location">
    <subcellularLocation>
        <location>Cytoplasm</location>
        <location>Cell cortex</location>
    </subcellularLocation>
    <subcellularLocation>
        <location>Cleavage furrow</location>
    </subcellularLocation>
    <text>Enriched in the cortex of interphase cells and translocated to the cleavage furrow during cytokinesis.</text>
</comment>
<comment type="disruption phenotype">
    <text evidence="4 5 6 7">No change in cytokinesis as gapA can functionally replace this protein. Null cells project numerous filopodia, show increased cell motility during growth and form multi-tipped aggregates during development and show elevated levels of F-actin that is organized in large leading edges, membrane ruffles or numerous large filopods. RgaA and gapA double mutant prevents quaternary complex formation (activated rac1A, ctxA, ctxB and either rgaA or gapA) and localization of the cortexillins to the cleavage furrow; interferes with cytokinesis to a similar extent as the simultaneous elimination of ctxA and ctxB, shows extremely large, flat and multinucleate cells and has increased cell motility and abnormal development.</text>
</comment>
<comment type="miscellaneous">
    <text>rgaA lacks rasGAP activity in vitro. rgaA expression is inversely correlated with the speed of cell motility.</text>
</comment>
<gene>
    <name type="primary">rgaA</name>
    <name type="synonym">DG1029</name>
    <name type="synonym">rasGAP1</name>
    <name type="ORF">DDB_G0287585</name>
</gene>
<keyword id="KW-0175">Coiled coil</keyword>
<keyword id="KW-0963">Cytoplasm</keyword>
<keyword id="KW-1185">Reference proteome</keyword>
<reference key="1">
    <citation type="journal article" date="1996" name="FEBS Lett.">
        <title>DGAP1, a homologue of rasGTPase activating proteins that controls growth, cytokinesis, and development in Dictyostelium discoideum.</title>
        <authorList>
            <person name="Faix J."/>
            <person name="Dittrich W."/>
        </authorList>
    </citation>
    <scope>NUCLEOTIDE SEQUENCE [GENOMIC DNA]</scope>
    <scope>FUNCTION</scope>
    <scope>DISRUPTION PHENOTYPE</scope>
    <scope>DEVELOPMENTAL STAGE</scope>
    <scope>SUBCELLULAR LOCATION</scope>
    <source>
        <strain>AX3</strain>
    </source>
</reference>
<reference key="2">
    <citation type="journal article" date="1997" name="Development">
        <title>A Ras GAP is essential for cytokinesis and spatial patterning in Dictyostelium.</title>
        <authorList>
            <person name="Lee S."/>
            <person name="Escalante R."/>
            <person name="Firtel R.A."/>
        </authorList>
    </citation>
    <scope>NUCLEOTIDE SEQUENCE [GENOMIC DNA]</scope>
    <source>
        <strain>AX3</strain>
    </source>
</reference>
<reference key="3">
    <citation type="journal article" date="2005" name="Nature">
        <title>The genome of the social amoeba Dictyostelium discoideum.</title>
        <authorList>
            <person name="Eichinger L."/>
            <person name="Pachebat J.A."/>
            <person name="Gloeckner G."/>
            <person name="Rajandream M.A."/>
            <person name="Sucgang R."/>
            <person name="Berriman M."/>
            <person name="Song J."/>
            <person name="Olsen R."/>
            <person name="Szafranski K."/>
            <person name="Xu Q."/>
            <person name="Tunggal B."/>
            <person name="Kummerfeld S."/>
            <person name="Madera M."/>
            <person name="Konfortov B.A."/>
            <person name="Rivero F."/>
            <person name="Bankier A.T."/>
            <person name="Lehmann R."/>
            <person name="Hamlin N."/>
            <person name="Davies R."/>
            <person name="Gaudet P."/>
            <person name="Fey P."/>
            <person name="Pilcher K."/>
            <person name="Chen G."/>
            <person name="Saunders D."/>
            <person name="Sodergren E.J."/>
            <person name="Davis P."/>
            <person name="Kerhornou A."/>
            <person name="Nie X."/>
            <person name="Hall N."/>
            <person name="Anjard C."/>
            <person name="Hemphill L."/>
            <person name="Bason N."/>
            <person name="Farbrother P."/>
            <person name="Desany B."/>
            <person name="Just E."/>
            <person name="Morio T."/>
            <person name="Rost R."/>
            <person name="Churcher C.M."/>
            <person name="Cooper J."/>
            <person name="Haydock S."/>
            <person name="van Driessche N."/>
            <person name="Cronin A."/>
            <person name="Goodhead I."/>
            <person name="Muzny D.M."/>
            <person name="Mourier T."/>
            <person name="Pain A."/>
            <person name="Lu M."/>
            <person name="Harper D."/>
            <person name="Lindsay R."/>
            <person name="Hauser H."/>
            <person name="James K.D."/>
            <person name="Quiles M."/>
            <person name="Madan Babu M."/>
            <person name="Saito T."/>
            <person name="Buchrieser C."/>
            <person name="Wardroper A."/>
            <person name="Felder M."/>
            <person name="Thangavelu M."/>
            <person name="Johnson D."/>
            <person name="Knights A."/>
            <person name="Loulseged H."/>
            <person name="Mungall K.L."/>
            <person name="Oliver K."/>
            <person name="Price C."/>
            <person name="Quail M.A."/>
            <person name="Urushihara H."/>
            <person name="Hernandez J."/>
            <person name="Rabbinowitsch E."/>
            <person name="Steffen D."/>
            <person name="Sanders M."/>
            <person name="Ma J."/>
            <person name="Kohara Y."/>
            <person name="Sharp S."/>
            <person name="Simmonds M.N."/>
            <person name="Spiegler S."/>
            <person name="Tivey A."/>
            <person name="Sugano S."/>
            <person name="White B."/>
            <person name="Walker D."/>
            <person name="Woodward J.R."/>
            <person name="Winckler T."/>
            <person name="Tanaka Y."/>
            <person name="Shaulsky G."/>
            <person name="Schleicher M."/>
            <person name="Weinstock G.M."/>
            <person name="Rosenthal A."/>
            <person name="Cox E.C."/>
            <person name="Chisholm R.L."/>
            <person name="Gibbs R.A."/>
            <person name="Loomis W.F."/>
            <person name="Platzer M."/>
            <person name="Kay R.R."/>
            <person name="Williams J.G."/>
            <person name="Dear P.H."/>
            <person name="Noegel A.A."/>
            <person name="Barrell B.G."/>
            <person name="Kuspa A."/>
        </authorList>
    </citation>
    <scope>NUCLEOTIDE SEQUENCE [LARGE SCALE GENOMIC DNA]</scope>
    <source>
        <strain>AX4</strain>
    </source>
</reference>
<reference key="4">
    <citation type="journal article" date="1998" name="J. Cell Sci.">
        <title>The IQGAP-related protein DGAP1 interacts with Rac and is involved in the modulation of the F-actin cytoskeleton and control of cell motility.</title>
        <authorList>
            <person name="Faix J."/>
            <person name="Clougherty C."/>
            <person name="Konzok A."/>
            <person name="Mintert U."/>
            <person name="Murphy J."/>
            <person name="Albrecht R."/>
            <person name="Muhlbauer B."/>
            <person name="Kuhlmann J."/>
        </authorList>
    </citation>
    <scope>INTERACTION WITH RAC1A AND RACE</scope>
    <scope>DISRUPTION PHENOTYPE</scope>
    <scope>FUNCTION</scope>
</reference>
<reference key="5">
    <citation type="journal article" date="2000" name="J. Cell Sci.">
        <title>Rac1 GTPases control filopodia formation, cell motility, endocytosis, cytokinesis and development in Dictyostelium.</title>
        <authorList>
            <person name="Dumontier M."/>
            <person name="Hoecht P."/>
            <person name="Mintert U."/>
            <person name="Faix J."/>
        </authorList>
    </citation>
    <scope>FUNCTION</scope>
    <scope>DISRUPTION PHENOTYPE</scope>
    <scope>INTERACTION WITH RAC1A; RAC1B AND RAC1C</scope>
</reference>
<reference key="6">
    <citation type="journal article" date="2001" name="EMBO J.">
        <title>Recruitment of cortexillin into the cleavage furrow is controlled by Rac1 and IQGAP-related proteins.</title>
        <authorList>
            <person name="Faix J."/>
            <person name="Weber I."/>
            <person name="Mintert U."/>
            <person name="Koehler J."/>
            <person name="Lottspeich F."/>
            <person name="Marriott G."/>
        </authorList>
    </citation>
    <scope>FUNCTION</scope>
    <scope>SUBUNIT</scope>
    <scope>DISRUPTION PHENOTYPE</scope>
    <scope>SUBCELLULAR LOCATION</scope>
    <scope>INTERACTION WITH RAC1A AND CTXA</scope>
</reference>
<protein>
    <recommendedName>
        <fullName>Ras GTPase-activating-like protein rgaA</fullName>
        <shortName>DGAP1</shortName>
    </recommendedName>
    <alternativeName>
        <fullName>Developmental gene 1029 protein</fullName>
    </alternativeName>
</protein>
<name>RGAA_DICDI</name>
<feature type="chain" id="PRO_0000388253" description="Ras GTPase-activating-like protein rgaA">
    <location>
        <begin position="1"/>
        <end position="822"/>
    </location>
</feature>
<feature type="domain" description="Ras-GAP" evidence="2">
    <location>
        <begin position="234"/>
        <end position="477"/>
    </location>
</feature>
<feature type="region of interest" description="Disordered" evidence="3">
    <location>
        <begin position="1"/>
        <end position="36"/>
    </location>
</feature>
<feature type="region of interest" description="Required for interaction to rac1A">
    <location>
        <begin position="161"/>
        <end position="822"/>
    </location>
</feature>
<feature type="coiled-coil region" evidence="1">
    <location>
        <begin position="104"/>
        <end position="152"/>
    </location>
</feature>
<feature type="compositionally biased region" description="Basic and acidic residues" evidence="3">
    <location>
        <begin position="15"/>
        <end position="27"/>
    </location>
</feature>
<feature type="sequence conflict" description="In Ref. 2; AAB39262." evidence="8" ref="2">
    <original>F</original>
    <variation>I</variation>
    <location>
        <position position="55"/>
    </location>
</feature>
<feature type="sequence conflict" description="In Ref. 2; AAB39262." evidence="8" ref="2">
    <original>L</original>
    <variation>W</variation>
    <location>
        <position position="365"/>
    </location>
</feature>
<feature type="sequence conflict" description="In Ref. 1; AAB62276." evidence="8" ref="1">
    <original>I</original>
    <variation>T</variation>
    <location>
        <position position="395"/>
    </location>
</feature>
<evidence type="ECO:0000255" key="1"/>
<evidence type="ECO:0000255" key="2">
    <source>
        <dbReference type="PROSITE-ProRule" id="PRU00167"/>
    </source>
</evidence>
<evidence type="ECO:0000256" key="3">
    <source>
        <dbReference type="SAM" id="MobiDB-lite"/>
    </source>
</evidence>
<evidence type="ECO:0000269" key="4">
    <source>
    </source>
</evidence>
<evidence type="ECO:0000269" key="5">
    <source>
    </source>
</evidence>
<evidence type="ECO:0000269" key="6">
    <source>
    </source>
</evidence>
<evidence type="ECO:0000269" key="7">
    <source>
    </source>
</evidence>
<evidence type="ECO:0000305" key="8"/>
<organism>
    <name type="scientific">Dictyostelium discoideum</name>
    <name type="common">Social amoeba</name>
    <dbReference type="NCBI Taxonomy" id="44689"/>
    <lineage>
        <taxon>Eukaryota</taxon>
        <taxon>Amoebozoa</taxon>
        <taxon>Evosea</taxon>
        <taxon>Eumycetozoa</taxon>
        <taxon>Dictyostelia</taxon>
        <taxon>Dictyosteliales</taxon>
        <taxon>Dictyosteliaceae</taxon>
        <taxon>Dictyostelium</taxon>
    </lineage>
</organism>